<name>RS6_LACAC</name>
<feature type="chain" id="PRO_0000229546" description="Small ribosomal subunit protein bS6">
    <location>
        <begin position="1"/>
        <end position="98"/>
    </location>
</feature>
<reference key="1">
    <citation type="journal article" date="2005" name="Proc. Natl. Acad. Sci. U.S.A.">
        <title>Complete genome sequence of the probiotic lactic acid bacterium Lactobacillus acidophilus NCFM.</title>
        <authorList>
            <person name="Altermann E."/>
            <person name="Russell W.M."/>
            <person name="Azcarate-Peril M.A."/>
            <person name="Barrangou R."/>
            <person name="Buck B.L."/>
            <person name="McAuliffe O."/>
            <person name="Souther N."/>
            <person name="Dobson A."/>
            <person name="Duong T."/>
            <person name="Callanan M."/>
            <person name="Lick S."/>
            <person name="Hamrick A."/>
            <person name="Cano R."/>
            <person name="Klaenhammer T.R."/>
        </authorList>
    </citation>
    <scope>NUCLEOTIDE SEQUENCE [LARGE SCALE GENOMIC DNA]</scope>
    <source>
        <strain>ATCC 700396 / NCK56 / N2 / NCFM</strain>
    </source>
</reference>
<organism>
    <name type="scientific">Lactobacillus acidophilus (strain ATCC 700396 / NCK56 / N2 / NCFM)</name>
    <dbReference type="NCBI Taxonomy" id="272621"/>
    <lineage>
        <taxon>Bacteria</taxon>
        <taxon>Bacillati</taxon>
        <taxon>Bacillota</taxon>
        <taxon>Bacilli</taxon>
        <taxon>Lactobacillales</taxon>
        <taxon>Lactobacillaceae</taxon>
        <taxon>Lactobacillus</taxon>
    </lineage>
</organism>
<accession>Q5FN09</accession>
<sequence>MATTKYEVTYIIKPDIDEDNKKALVENYDKVIADNGGTMVESKDWGKRRFAYEIDKYREGTYHIMTFTADNADAVNEFSRLSKIDNAILRSMTVKLDK</sequence>
<comment type="function">
    <text evidence="1">Binds together with bS18 to 16S ribosomal RNA.</text>
</comment>
<comment type="similarity">
    <text evidence="1">Belongs to the bacterial ribosomal protein bS6 family.</text>
</comment>
<proteinExistence type="inferred from homology"/>
<dbReference type="EMBL" id="CP000033">
    <property type="protein sequence ID" value="AAV41915.1"/>
    <property type="molecule type" value="Genomic_DNA"/>
</dbReference>
<dbReference type="RefSeq" id="WP_003549370.1">
    <property type="nucleotide sequence ID" value="NC_006814.3"/>
</dbReference>
<dbReference type="RefSeq" id="YP_192946.1">
    <property type="nucleotide sequence ID" value="NC_006814.3"/>
</dbReference>
<dbReference type="SMR" id="Q5FN09"/>
<dbReference type="STRING" id="272621.LBA0007"/>
<dbReference type="GeneID" id="93290880"/>
<dbReference type="KEGG" id="lac:LBA0007"/>
<dbReference type="PATRIC" id="fig|272621.13.peg.7"/>
<dbReference type="eggNOG" id="COG0360">
    <property type="taxonomic scope" value="Bacteria"/>
</dbReference>
<dbReference type="HOGENOM" id="CLU_113441_5_3_9"/>
<dbReference type="OrthoDB" id="9812702at2"/>
<dbReference type="BioCyc" id="LACI272621:G1G49-7-MONOMER"/>
<dbReference type="Proteomes" id="UP000006381">
    <property type="component" value="Chromosome"/>
</dbReference>
<dbReference type="GO" id="GO:0005737">
    <property type="term" value="C:cytoplasm"/>
    <property type="evidence" value="ECO:0007669"/>
    <property type="project" value="UniProtKB-ARBA"/>
</dbReference>
<dbReference type="GO" id="GO:1990904">
    <property type="term" value="C:ribonucleoprotein complex"/>
    <property type="evidence" value="ECO:0007669"/>
    <property type="project" value="UniProtKB-KW"/>
</dbReference>
<dbReference type="GO" id="GO:0005840">
    <property type="term" value="C:ribosome"/>
    <property type="evidence" value="ECO:0007669"/>
    <property type="project" value="UniProtKB-KW"/>
</dbReference>
<dbReference type="GO" id="GO:0070181">
    <property type="term" value="F:small ribosomal subunit rRNA binding"/>
    <property type="evidence" value="ECO:0007669"/>
    <property type="project" value="TreeGrafter"/>
</dbReference>
<dbReference type="GO" id="GO:0003735">
    <property type="term" value="F:structural constituent of ribosome"/>
    <property type="evidence" value="ECO:0007669"/>
    <property type="project" value="InterPro"/>
</dbReference>
<dbReference type="GO" id="GO:0006412">
    <property type="term" value="P:translation"/>
    <property type="evidence" value="ECO:0007669"/>
    <property type="project" value="UniProtKB-UniRule"/>
</dbReference>
<dbReference type="CDD" id="cd00473">
    <property type="entry name" value="bS6"/>
    <property type="match status" value="1"/>
</dbReference>
<dbReference type="Gene3D" id="3.30.70.60">
    <property type="match status" value="1"/>
</dbReference>
<dbReference type="HAMAP" id="MF_00360">
    <property type="entry name" value="Ribosomal_bS6"/>
    <property type="match status" value="1"/>
</dbReference>
<dbReference type="InterPro" id="IPR000529">
    <property type="entry name" value="Ribosomal_bS6"/>
</dbReference>
<dbReference type="InterPro" id="IPR035980">
    <property type="entry name" value="Ribosomal_bS6_sf"/>
</dbReference>
<dbReference type="InterPro" id="IPR020814">
    <property type="entry name" value="Ribosomal_S6_plastid/chlpt"/>
</dbReference>
<dbReference type="InterPro" id="IPR014717">
    <property type="entry name" value="Transl_elong_EF1B/ribsomal_bS6"/>
</dbReference>
<dbReference type="NCBIfam" id="TIGR00166">
    <property type="entry name" value="S6"/>
    <property type="match status" value="1"/>
</dbReference>
<dbReference type="PANTHER" id="PTHR21011">
    <property type="entry name" value="MITOCHONDRIAL 28S RIBOSOMAL PROTEIN S6"/>
    <property type="match status" value="1"/>
</dbReference>
<dbReference type="PANTHER" id="PTHR21011:SF1">
    <property type="entry name" value="SMALL RIBOSOMAL SUBUNIT PROTEIN BS6M"/>
    <property type="match status" value="1"/>
</dbReference>
<dbReference type="Pfam" id="PF01250">
    <property type="entry name" value="Ribosomal_S6"/>
    <property type="match status" value="1"/>
</dbReference>
<dbReference type="SUPFAM" id="SSF54995">
    <property type="entry name" value="Ribosomal protein S6"/>
    <property type="match status" value="1"/>
</dbReference>
<gene>
    <name evidence="1" type="primary">rpsF</name>
    <name type="ordered locus">LBA0007</name>
</gene>
<evidence type="ECO:0000255" key="1">
    <source>
        <dbReference type="HAMAP-Rule" id="MF_00360"/>
    </source>
</evidence>
<evidence type="ECO:0000305" key="2"/>
<protein>
    <recommendedName>
        <fullName evidence="1">Small ribosomal subunit protein bS6</fullName>
    </recommendedName>
    <alternativeName>
        <fullName evidence="2">30S ribosomal protein S6</fullName>
    </alternativeName>
</protein>
<keyword id="KW-1185">Reference proteome</keyword>
<keyword id="KW-0687">Ribonucleoprotein</keyword>
<keyword id="KW-0689">Ribosomal protein</keyword>
<keyword id="KW-0694">RNA-binding</keyword>
<keyword id="KW-0699">rRNA-binding</keyword>